<proteinExistence type="evidence at protein level"/>
<protein>
    <recommendedName>
        <fullName evidence="5">Dehydrogenase citC</fullName>
        <ecNumber evidence="7">1.1.-.-</ecNumber>
    </recommendedName>
    <alternativeName>
        <fullName evidence="5">Citrinin synthesis protein C</fullName>
    </alternativeName>
</protein>
<gene>
    <name evidence="5" type="primary">citC</name>
    <name evidence="5" type="synonym">mrl7</name>
</gene>
<organism>
    <name type="scientific">Monascus ruber</name>
    <name type="common">Mold</name>
    <dbReference type="NCBI Taxonomy" id="89489"/>
    <lineage>
        <taxon>Eukaryota</taxon>
        <taxon>Fungi</taxon>
        <taxon>Dikarya</taxon>
        <taxon>Ascomycota</taxon>
        <taxon>Pezizomycotina</taxon>
        <taxon>Eurotiomycetes</taxon>
        <taxon>Eurotiomycetidae</taxon>
        <taxon>Eurotiales</taxon>
        <taxon>Aspergillaceae</taxon>
        <taxon>Monascus</taxon>
    </lineage>
</organism>
<sequence length="622" mass="66811">MATVKVIDFIQTPFDFLIVGGGTAGLVLAARLSEEPGIQVGVIEAGSLRLGDPKVDLPTGPGQMLGDPGYDWNFESIPQAGANAKAYHIPRGRMLGGSSGINFMSYNRPSAEDIDDWANKLGVKGWTWSELLPYFKRSENLEPIEPSASCPVSPKVHGTGGPIHTSIGPWQAPIEESLLAAFDEAARLQRPAEPYSGAHLGFYRSLFTLDRTSTPVRSYAVSGYYAPVMGRPNLKVLENAQVCRILLSDASDGIPVAEGVELHHAGARYAVSARREVILSAGSVQSPQLLELSGIGDPSVLEGAGIACRVANTDVGSNLQEHTMSAVSYECADGIMSVDSLFKDPALLEEHQSLYAKNHSGALSGSVSLMGFTPYSSLSTETQVDATMARIFDAPSVSGRLSQQNASYQRRQQEAVAARMQNRWSADIQFIGTPAYFNTAAGYASCAKIMSGPPVGYSACYSIVVSNMYPLSRGSVHVRTSNPMDAPAIDPGFLSHPVDVDVLAAGIVFADRVFRSTLLNGKVRRRVSPPAGLDLSNMDEARQFVRNHIVPYHHALGTCAMGQVVDEKLRVKGVRRLRVVDASVMPMQVSAAIMATVYAIAERASDIIKKDCGFGRRLRAHI</sequence>
<feature type="chain" id="PRO_0000440319" description="Dehydrogenase citC">
    <location>
        <begin position="1"/>
        <end position="622"/>
    </location>
</feature>
<feature type="active site" description="Proton acceptor" evidence="1">
    <location>
        <position position="554"/>
    </location>
</feature>
<feature type="binding site" evidence="1">
    <location>
        <begin position="23"/>
        <end position="24"/>
    </location>
    <ligand>
        <name>FAD</name>
        <dbReference type="ChEBI" id="CHEBI:57692"/>
    </ligand>
</feature>
<feature type="binding site" evidence="1">
    <location>
        <begin position="44"/>
        <end position="45"/>
    </location>
    <ligand>
        <name>FAD</name>
        <dbReference type="ChEBI" id="CHEBI:57692"/>
    </ligand>
</feature>
<feature type="binding site" evidence="1">
    <location>
        <begin position="102"/>
        <end position="105"/>
    </location>
    <ligand>
        <name>FAD</name>
        <dbReference type="ChEBI" id="CHEBI:57692"/>
    </ligand>
</feature>
<feature type="binding site" evidence="1">
    <location>
        <position position="582"/>
    </location>
    <ligand>
        <name>FAD</name>
        <dbReference type="ChEBI" id="CHEBI:57692"/>
    </ligand>
</feature>
<feature type="binding site" evidence="1">
    <location>
        <begin position="593"/>
        <end position="594"/>
    </location>
    <ligand>
        <name>FAD</name>
        <dbReference type="ChEBI" id="CHEBI:57692"/>
    </ligand>
</feature>
<keyword id="KW-0274">FAD</keyword>
<keyword id="KW-0285">Flavoprotein</keyword>
<keyword id="KW-0560">Oxidoreductase</keyword>
<dbReference type="EC" id="1.1.-.-" evidence="7"/>
<dbReference type="EMBL" id="KT781075">
    <property type="protein sequence ID" value="ALI92648.1"/>
    <property type="molecule type" value="Genomic_DNA"/>
</dbReference>
<dbReference type="SMR" id="A0A161CEV4"/>
<dbReference type="GO" id="GO:0050660">
    <property type="term" value="F:flavin adenine dinucleotide binding"/>
    <property type="evidence" value="ECO:0007669"/>
    <property type="project" value="InterPro"/>
</dbReference>
<dbReference type="GO" id="GO:0016614">
    <property type="term" value="F:oxidoreductase activity, acting on CH-OH group of donors"/>
    <property type="evidence" value="ECO:0007669"/>
    <property type="project" value="InterPro"/>
</dbReference>
<dbReference type="GO" id="GO:0044550">
    <property type="term" value="P:secondary metabolite biosynthetic process"/>
    <property type="evidence" value="ECO:0007669"/>
    <property type="project" value="UniProtKB-ARBA"/>
</dbReference>
<dbReference type="Gene3D" id="3.50.50.60">
    <property type="entry name" value="FAD/NAD(P)-binding domain"/>
    <property type="match status" value="1"/>
</dbReference>
<dbReference type="Gene3D" id="3.30.560.10">
    <property type="entry name" value="Glucose Oxidase, domain 3"/>
    <property type="match status" value="1"/>
</dbReference>
<dbReference type="InterPro" id="IPR036188">
    <property type="entry name" value="FAD/NAD-bd_sf"/>
</dbReference>
<dbReference type="InterPro" id="IPR012132">
    <property type="entry name" value="GMC_OxRdtase"/>
</dbReference>
<dbReference type="InterPro" id="IPR000172">
    <property type="entry name" value="GMC_OxRdtase_N"/>
</dbReference>
<dbReference type="InterPro" id="IPR007867">
    <property type="entry name" value="GMC_OxRtase_C"/>
</dbReference>
<dbReference type="PANTHER" id="PTHR11552">
    <property type="entry name" value="GLUCOSE-METHANOL-CHOLINE GMC OXIDOREDUCTASE"/>
    <property type="match status" value="1"/>
</dbReference>
<dbReference type="PANTHER" id="PTHR11552:SF210">
    <property type="entry name" value="GLUCOSE-METHANOL-CHOLINE OXIDOREDUCTASE N-TERMINAL DOMAIN-CONTAINING PROTEIN-RELATED"/>
    <property type="match status" value="1"/>
</dbReference>
<dbReference type="Pfam" id="PF05199">
    <property type="entry name" value="GMC_oxred_C"/>
    <property type="match status" value="1"/>
</dbReference>
<dbReference type="Pfam" id="PF00732">
    <property type="entry name" value="GMC_oxred_N"/>
    <property type="match status" value="1"/>
</dbReference>
<dbReference type="PIRSF" id="PIRSF000137">
    <property type="entry name" value="Alcohol_oxidase"/>
    <property type="match status" value="1"/>
</dbReference>
<dbReference type="SUPFAM" id="SSF54373">
    <property type="entry name" value="FAD-linked reductases, C-terminal domain"/>
    <property type="match status" value="1"/>
</dbReference>
<dbReference type="SUPFAM" id="SSF51905">
    <property type="entry name" value="FAD/NAD(P)-binding domain"/>
    <property type="match status" value="1"/>
</dbReference>
<dbReference type="PROSITE" id="PS00623">
    <property type="entry name" value="GMC_OXRED_1"/>
    <property type="match status" value="1"/>
</dbReference>
<dbReference type="PROSITE" id="PS00624">
    <property type="entry name" value="GMC_OXRED_2"/>
    <property type="match status" value="1"/>
</dbReference>
<evidence type="ECO:0000250" key="1">
    <source>
        <dbReference type="UniProtKB" id="E4QP00"/>
    </source>
</evidence>
<evidence type="ECO:0000250" key="2">
    <source>
        <dbReference type="UniProtKB" id="Q12062"/>
    </source>
</evidence>
<evidence type="ECO:0000269" key="3">
    <source>
    </source>
</evidence>
<evidence type="ECO:0000269" key="4">
    <source ref="1"/>
</evidence>
<evidence type="ECO:0000303" key="5">
    <source ref="1"/>
</evidence>
<evidence type="ECO:0000305" key="6"/>
<evidence type="ECO:0000305" key="7">
    <source ref="1"/>
</evidence>
<name>CITC_MONRU</name>
<reference key="1">
    <citation type="journal article" date="2016" name="Chem. Sci.">
        <title>The molecular steps of citrinin biosynthesis in fungi.</title>
        <authorList>
            <person name="He Y."/>
            <person name="Cox R.J."/>
        </authorList>
    </citation>
    <scope>NUCLEOTIDE SEQUENCE [GENOMIC DNA]</scope>
    <scope>DISRUPTION PHENOTYPE</scope>
    <scope>FUNCTION</scope>
    <scope>CATALYTIC ACTIVITY</scope>
    <scope>PATHWAY</scope>
    <source>
        <strain>M7</strain>
    </source>
</reference>
<reference key="2">
    <citation type="journal article" date="2017" name="Chem. Commun. (Camb.)">
        <title>In trans hydrolysis of carrier protein-bound acyl intermediates by CitA during citrinin biosynthesis.</title>
        <authorList>
            <person name="Storm P.A."/>
            <person name="Townsend C.A."/>
        </authorList>
    </citation>
    <scope>FUNCTION</scope>
</reference>
<accession>A0A161CEV4</accession>
<comment type="function">
    <text evidence="3 4">Non-reducing polyketide synthase; part of the gene cluster that mediates the biosynthesis of the mycotoxin citrinin, a hepato-nephrotoxic compound to humans due to inhibition of respiration complex III (Ref.1). The pathway begins with the synthesis of a keto-aldehyde intermediate by the citrinin PKS (pksCT also named citS) from successive condensations of 4 malonyl-CoA units, presumably with a simple acetyl-CoA starter unit (Ref.1). Release of the keto-aldehyde intermediate is consistent with the presence of the C-terminal reductive release domain (Ref.1). CitA collaborates with citS by catalyzing the hydrolysis of ACP-bound acyl intermediates to free the ACP from stalled intermediates (PubMed:29189834). CitB then catalyzes the oxidation of the C-12 methyl of the ketone intermediate to an alcohol intermediate which is further oxidized by the oxidoreductase citC to produce a bisaldehyde intermediate (Ref.1). The fourth catalytic step is catalyzed by the citD aldehyde dehydrogenase (Ref.1). The final transformation is the reduction of C-3 by citE to provide the chemically stable citrinin nucleus (Ref.1). CitE appears highly selective for its substrate as its presence in any context other than a full complement of citS and citA-D does not result in observable new compounds (Ref.1).</text>
</comment>
<comment type="cofactor">
    <cofactor evidence="1">
        <name>FAD</name>
        <dbReference type="ChEBI" id="CHEBI:57692"/>
    </cofactor>
</comment>
<comment type="pathway">
    <text evidence="4">Mycotoxin biosynthesis.</text>
</comment>
<comment type="subunit">
    <text evidence="2">Homodimer.</text>
</comment>
<comment type="disruption phenotype">
    <text evidence="4">Leads to complete absence of citrinin production (Ref.1).</text>
</comment>
<comment type="similarity">
    <text evidence="6">Belongs to the GMC oxidoreductase family.</text>
</comment>